<reference key="1">
    <citation type="journal article" date="2005" name="J. Bacteriol.">
        <title>Whole-genome sequence analysis of Pseudomonas syringae pv. phaseolicola 1448A reveals divergence among pathovars in genes involved in virulence and transposition.</title>
        <authorList>
            <person name="Joardar V."/>
            <person name="Lindeberg M."/>
            <person name="Jackson R.W."/>
            <person name="Selengut J."/>
            <person name="Dodson R."/>
            <person name="Brinkac L.M."/>
            <person name="Daugherty S.C."/>
            <person name="DeBoy R.T."/>
            <person name="Durkin A.S."/>
            <person name="Gwinn Giglio M."/>
            <person name="Madupu R."/>
            <person name="Nelson W.C."/>
            <person name="Rosovitz M.J."/>
            <person name="Sullivan S.A."/>
            <person name="Crabtree J."/>
            <person name="Creasy T."/>
            <person name="Davidsen T.M."/>
            <person name="Haft D.H."/>
            <person name="Zafar N."/>
            <person name="Zhou L."/>
            <person name="Halpin R."/>
            <person name="Holley T."/>
            <person name="Khouri H.M."/>
            <person name="Feldblyum T.V."/>
            <person name="White O."/>
            <person name="Fraser C.M."/>
            <person name="Chatterjee A.K."/>
            <person name="Cartinhour S."/>
            <person name="Schneider D."/>
            <person name="Mansfield J.W."/>
            <person name="Collmer A."/>
            <person name="Buell R."/>
        </authorList>
    </citation>
    <scope>NUCLEOTIDE SEQUENCE [LARGE SCALE GENOMIC DNA]</scope>
    <source>
        <strain>1448A / Race 6</strain>
    </source>
</reference>
<name>RF3_PSE14</name>
<evidence type="ECO:0000255" key="1">
    <source>
        <dbReference type="HAMAP-Rule" id="MF_00072"/>
    </source>
</evidence>
<keyword id="KW-0963">Cytoplasm</keyword>
<keyword id="KW-0342">GTP-binding</keyword>
<keyword id="KW-0547">Nucleotide-binding</keyword>
<keyword id="KW-0648">Protein biosynthesis</keyword>
<proteinExistence type="inferred from homology"/>
<dbReference type="EMBL" id="CP000058">
    <property type="protein sequence ID" value="AAZ36524.1"/>
    <property type="molecule type" value="Genomic_DNA"/>
</dbReference>
<dbReference type="RefSeq" id="WP_004655493.1">
    <property type="nucleotide sequence ID" value="NC_005773.3"/>
</dbReference>
<dbReference type="SMR" id="Q48DZ2"/>
<dbReference type="KEGG" id="psp:PSPPH_4280"/>
<dbReference type="eggNOG" id="COG4108">
    <property type="taxonomic scope" value="Bacteria"/>
</dbReference>
<dbReference type="HOGENOM" id="CLU_002794_2_1_6"/>
<dbReference type="Proteomes" id="UP000000551">
    <property type="component" value="Chromosome"/>
</dbReference>
<dbReference type="GO" id="GO:0005829">
    <property type="term" value="C:cytosol"/>
    <property type="evidence" value="ECO:0007669"/>
    <property type="project" value="TreeGrafter"/>
</dbReference>
<dbReference type="GO" id="GO:0005525">
    <property type="term" value="F:GTP binding"/>
    <property type="evidence" value="ECO:0007669"/>
    <property type="project" value="UniProtKB-UniRule"/>
</dbReference>
<dbReference type="GO" id="GO:0003924">
    <property type="term" value="F:GTPase activity"/>
    <property type="evidence" value="ECO:0007669"/>
    <property type="project" value="InterPro"/>
</dbReference>
<dbReference type="GO" id="GO:0097216">
    <property type="term" value="F:guanosine tetraphosphate binding"/>
    <property type="evidence" value="ECO:0007669"/>
    <property type="project" value="UniProtKB-ARBA"/>
</dbReference>
<dbReference type="GO" id="GO:0016150">
    <property type="term" value="F:translation release factor activity, codon nonspecific"/>
    <property type="evidence" value="ECO:0007669"/>
    <property type="project" value="TreeGrafter"/>
</dbReference>
<dbReference type="GO" id="GO:0016149">
    <property type="term" value="F:translation release factor activity, codon specific"/>
    <property type="evidence" value="ECO:0007669"/>
    <property type="project" value="UniProtKB-UniRule"/>
</dbReference>
<dbReference type="GO" id="GO:0006449">
    <property type="term" value="P:regulation of translational termination"/>
    <property type="evidence" value="ECO:0007669"/>
    <property type="project" value="UniProtKB-UniRule"/>
</dbReference>
<dbReference type="CDD" id="cd04169">
    <property type="entry name" value="RF3"/>
    <property type="match status" value="1"/>
</dbReference>
<dbReference type="CDD" id="cd03689">
    <property type="entry name" value="RF3_II"/>
    <property type="match status" value="1"/>
</dbReference>
<dbReference type="CDD" id="cd16259">
    <property type="entry name" value="RF3_III"/>
    <property type="match status" value="1"/>
</dbReference>
<dbReference type="FunFam" id="2.40.30.10:FF:000040">
    <property type="entry name" value="Peptide chain release factor 3"/>
    <property type="match status" value="1"/>
</dbReference>
<dbReference type="FunFam" id="3.30.70.3280:FF:000001">
    <property type="entry name" value="Peptide chain release factor 3"/>
    <property type="match status" value="1"/>
</dbReference>
<dbReference type="FunFam" id="3.40.50.300:FF:000542">
    <property type="entry name" value="Peptide chain release factor 3"/>
    <property type="match status" value="1"/>
</dbReference>
<dbReference type="Gene3D" id="3.40.50.300">
    <property type="entry name" value="P-loop containing nucleotide triphosphate hydrolases"/>
    <property type="match status" value="2"/>
</dbReference>
<dbReference type="Gene3D" id="3.30.70.3280">
    <property type="entry name" value="Peptide chain release factor 3, domain III"/>
    <property type="match status" value="1"/>
</dbReference>
<dbReference type="HAMAP" id="MF_00072">
    <property type="entry name" value="Rel_fac_3"/>
    <property type="match status" value="1"/>
</dbReference>
<dbReference type="InterPro" id="IPR053905">
    <property type="entry name" value="EF-G-like_DII"/>
</dbReference>
<dbReference type="InterPro" id="IPR035647">
    <property type="entry name" value="EFG_III/V"/>
</dbReference>
<dbReference type="InterPro" id="IPR031157">
    <property type="entry name" value="G_TR_CS"/>
</dbReference>
<dbReference type="InterPro" id="IPR027417">
    <property type="entry name" value="P-loop_NTPase"/>
</dbReference>
<dbReference type="InterPro" id="IPR004548">
    <property type="entry name" value="PrfC"/>
</dbReference>
<dbReference type="InterPro" id="IPR032090">
    <property type="entry name" value="RF3_C"/>
</dbReference>
<dbReference type="InterPro" id="IPR038467">
    <property type="entry name" value="RF3_dom_3_sf"/>
</dbReference>
<dbReference type="InterPro" id="IPR041732">
    <property type="entry name" value="RF3_GTP-bd"/>
</dbReference>
<dbReference type="InterPro" id="IPR005225">
    <property type="entry name" value="Small_GTP-bd"/>
</dbReference>
<dbReference type="InterPro" id="IPR000795">
    <property type="entry name" value="T_Tr_GTP-bd_dom"/>
</dbReference>
<dbReference type="InterPro" id="IPR009000">
    <property type="entry name" value="Transl_B-barrel_sf"/>
</dbReference>
<dbReference type="NCBIfam" id="TIGR00503">
    <property type="entry name" value="prfC"/>
    <property type="match status" value="1"/>
</dbReference>
<dbReference type="NCBIfam" id="NF001964">
    <property type="entry name" value="PRK00741.1"/>
    <property type="match status" value="1"/>
</dbReference>
<dbReference type="NCBIfam" id="TIGR00231">
    <property type="entry name" value="small_GTP"/>
    <property type="match status" value="1"/>
</dbReference>
<dbReference type="PANTHER" id="PTHR43556">
    <property type="entry name" value="PEPTIDE CHAIN RELEASE FACTOR RF3"/>
    <property type="match status" value="1"/>
</dbReference>
<dbReference type="PANTHER" id="PTHR43556:SF2">
    <property type="entry name" value="PEPTIDE CHAIN RELEASE FACTOR RF3"/>
    <property type="match status" value="1"/>
</dbReference>
<dbReference type="Pfam" id="PF22042">
    <property type="entry name" value="EF-G_D2"/>
    <property type="match status" value="1"/>
</dbReference>
<dbReference type="Pfam" id="PF00009">
    <property type="entry name" value="GTP_EFTU"/>
    <property type="match status" value="1"/>
</dbReference>
<dbReference type="Pfam" id="PF16658">
    <property type="entry name" value="RF3_C"/>
    <property type="match status" value="1"/>
</dbReference>
<dbReference type="PRINTS" id="PR00315">
    <property type="entry name" value="ELONGATNFCT"/>
</dbReference>
<dbReference type="SUPFAM" id="SSF54980">
    <property type="entry name" value="EF-G C-terminal domain-like"/>
    <property type="match status" value="1"/>
</dbReference>
<dbReference type="SUPFAM" id="SSF52540">
    <property type="entry name" value="P-loop containing nucleoside triphosphate hydrolases"/>
    <property type="match status" value="1"/>
</dbReference>
<dbReference type="SUPFAM" id="SSF50447">
    <property type="entry name" value="Translation proteins"/>
    <property type="match status" value="1"/>
</dbReference>
<dbReference type="PROSITE" id="PS00301">
    <property type="entry name" value="G_TR_1"/>
    <property type="match status" value="1"/>
</dbReference>
<dbReference type="PROSITE" id="PS51722">
    <property type="entry name" value="G_TR_2"/>
    <property type="match status" value="1"/>
</dbReference>
<accession>Q48DZ2</accession>
<comment type="function">
    <text evidence="1">Increases the formation of ribosomal termination complexes and stimulates activities of RF-1 and RF-2. It binds guanine nucleotides and has strong preference for UGA stop codons. It may interact directly with the ribosome. The stimulation of RF-1 and RF-2 is significantly reduced by GTP and GDP, but not by GMP.</text>
</comment>
<comment type="subcellular location">
    <subcellularLocation>
        <location evidence="1">Cytoplasm</location>
    </subcellularLocation>
</comment>
<comment type="similarity">
    <text evidence="1">Belongs to the TRAFAC class translation factor GTPase superfamily. Classic translation factor GTPase family. PrfC subfamily.</text>
</comment>
<gene>
    <name evidence="1" type="primary">prfC</name>
    <name type="ordered locus">PSPPH_4280</name>
</gene>
<feature type="chain" id="PRO_0000242198" description="Peptide chain release factor 3">
    <location>
        <begin position="1"/>
        <end position="527"/>
    </location>
</feature>
<feature type="domain" description="tr-type G">
    <location>
        <begin position="9"/>
        <end position="277"/>
    </location>
</feature>
<feature type="binding site" evidence="1">
    <location>
        <begin position="18"/>
        <end position="25"/>
    </location>
    <ligand>
        <name>GTP</name>
        <dbReference type="ChEBI" id="CHEBI:37565"/>
    </ligand>
</feature>
<feature type="binding site" evidence="1">
    <location>
        <begin position="86"/>
        <end position="90"/>
    </location>
    <ligand>
        <name>GTP</name>
        <dbReference type="ChEBI" id="CHEBI:37565"/>
    </ligand>
</feature>
<feature type="binding site" evidence="1">
    <location>
        <begin position="140"/>
        <end position="143"/>
    </location>
    <ligand>
        <name>GTP</name>
        <dbReference type="ChEBI" id="CHEBI:37565"/>
    </ligand>
</feature>
<protein>
    <recommendedName>
        <fullName evidence="1">Peptide chain release factor 3</fullName>
        <shortName evidence="1">RF-3</shortName>
    </recommendedName>
</protein>
<organism>
    <name type="scientific">Pseudomonas savastanoi pv. phaseolicola (strain 1448A / Race 6)</name>
    <name type="common">Pseudomonas syringae pv. phaseolicola (strain 1448A / Race 6)</name>
    <dbReference type="NCBI Taxonomy" id="264730"/>
    <lineage>
        <taxon>Bacteria</taxon>
        <taxon>Pseudomonadati</taxon>
        <taxon>Pseudomonadota</taxon>
        <taxon>Gammaproteobacteria</taxon>
        <taxon>Pseudomonadales</taxon>
        <taxon>Pseudomonadaceae</taxon>
        <taxon>Pseudomonas</taxon>
    </lineage>
</organism>
<sequence>MTQQAAEVAKRRTFAIISHPDAGKTTITEKLLLMGKAISIAGTVKSRKSDRHATSDWMEMEKQRGISITTSVMQFPYREHMINLLDTPGHEDFSEDTYRTLTAVDSALMVLDGGKGVEPRTIALMDVCRLRDTPIVSFINKLDRDIRDPIELLDEIEAVLKIKAAPITWPIGCYRDFKGVYHLADDYIIVYTAGHGHERTETKIIEKLDSDEARAHLGDEYERFVEQLELVQGACHEFNQQEFIDGQLTPVFFGTALGNFGVDHVLDAVVNWAPKPLARVANERTVEPAEEKFSGFVFKIQANMDPKHRDRIAFMRICSGRYDKGMKMRHVRLGKDVRIGDALTFFSSEREQLEEAYAGDIIGLHNHGTIQIGDTFTEGEALGFTGIPHFAPELFRRVRLKDPLKSKQLRQGLQQLAEEGATQVFFPQRSNDIILGAVGVLQFDVVASRLKEEYKVECAYEPITVWSARWIDCADKKKLEEFENKAVENLAVDGGGHLTYLAPTRVNLALMEERWPDVKFRATREHH</sequence>